<keyword id="KW-0539">Nucleus</keyword>
<keyword id="KW-1185">Reference proteome</keyword>
<proteinExistence type="evidence at protein level"/>
<protein>
    <recommendedName>
        <fullName evidence="9">Integrator complex subunit 6</fullName>
    </recommendedName>
</protein>
<evidence type="ECO:0000255" key="1">
    <source>
        <dbReference type="PROSITE-ProRule" id="PRU00219"/>
    </source>
</evidence>
<evidence type="ECO:0000256" key="2">
    <source>
        <dbReference type="SAM" id="MobiDB-lite"/>
    </source>
</evidence>
<evidence type="ECO:0000269" key="3">
    <source>
    </source>
</evidence>
<evidence type="ECO:0000269" key="4">
    <source>
    </source>
</evidence>
<evidence type="ECO:0000269" key="5">
    <source>
    </source>
</evidence>
<evidence type="ECO:0000269" key="6">
    <source>
    </source>
</evidence>
<evidence type="ECO:0000269" key="7">
    <source>
    </source>
</evidence>
<evidence type="ECO:0000269" key="8">
    <source>
    </source>
</evidence>
<evidence type="ECO:0000303" key="9">
    <source>
    </source>
</evidence>
<evidence type="ECO:0000303" key="10">
    <source>
    </source>
</evidence>
<evidence type="ECO:0000305" key="11"/>
<evidence type="ECO:0000312" key="12">
    <source>
        <dbReference type="EMBL" id="AAK93517.1"/>
    </source>
</evidence>
<evidence type="ECO:0000312" key="13">
    <source>
        <dbReference type="FlyBase" id="FBgn0261383"/>
    </source>
</evidence>
<evidence type="ECO:0000312" key="14">
    <source>
        <dbReference type="Proteomes" id="UP000000803"/>
    </source>
</evidence>
<name>INT6_DROME</name>
<organism evidence="14">
    <name type="scientific">Drosophila melanogaster</name>
    <name type="common">Fruit fly</name>
    <dbReference type="NCBI Taxonomy" id="7227"/>
    <lineage>
        <taxon>Eukaryota</taxon>
        <taxon>Metazoa</taxon>
        <taxon>Ecdysozoa</taxon>
        <taxon>Arthropoda</taxon>
        <taxon>Hexapoda</taxon>
        <taxon>Insecta</taxon>
        <taxon>Pterygota</taxon>
        <taxon>Neoptera</taxon>
        <taxon>Endopterygota</taxon>
        <taxon>Diptera</taxon>
        <taxon>Brachycera</taxon>
        <taxon>Muscomorpha</taxon>
        <taxon>Ephydroidea</taxon>
        <taxon>Drosophilidae</taxon>
        <taxon>Drosophila</taxon>
        <taxon>Sophophora</taxon>
    </lineage>
</organism>
<feature type="chain" id="PRO_0000437658" description="Integrator complex subunit 6">
    <location>
        <begin position="1"/>
        <end position="1284"/>
    </location>
</feature>
<feature type="domain" description="VWFA" evidence="1">
    <location>
        <begin position="3"/>
        <end position="134"/>
    </location>
</feature>
<feature type="region of interest" description="Disordered" evidence="2">
    <location>
        <begin position="653"/>
        <end position="824"/>
    </location>
</feature>
<feature type="region of interest" description="Disordered" evidence="2">
    <location>
        <begin position="864"/>
        <end position="895"/>
    </location>
</feature>
<feature type="region of interest" description="Disordered" evidence="2">
    <location>
        <begin position="1053"/>
        <end position="1086"/>
    </location>
</feature>
<feature type="region of interest" description="Disordered" evidence="2">
    <location>
        <begin position="1125"/>
        <end position="1180"/>
    </location>
</feature>
<feature type="compositionally biased region" description="Gly residues" evidence="2">
    <location>
        <begin position="690"/>
        <end position="721"/>
    </location>
</feature>
<feature type="compositionally biased region" description="Low complexity" evidence="2">
    <location>
        <begin position="752"/>
        <end position="781"/>
    </location>
</feature>
<feature type="compositionally biased region" description="Low complexity" evidence="2">
    <location>
        <begin position="803"/>
        <end position="824"/>
    </location>
</feature>
<feature type="compositionally biased region" description="Polar residues" evidence="2">
    <location>
        <begin position="879"/>
        <end position="890"/>
    </location>
</feature>
<feature type="compositionally biased region" description="Low complexity" evidence="2">
    <location>
        <begin position="1053"/>
        <end position="1074"/>
    </location>
</feature>
<feature type="compositionally biased region" description="Low complexity" evidence="2">
    <location>
        <begin position="1125"/>
        <end position="1141"/>
    </location>
</feature>
<feature type="compositionally biased region" description="Polar residues" evidence="2">
    <location>
        <begin position="1159"/>
        <end position="1171"/>
    </location>
</feature>
<feature type="sequence conflict" description="In Ref. 3; AAK93517." evidence="11" ref="3">
    <original>S</original>
    <variation>P</variation>
    <location>
        <position position="265"/>
    </location>
</feature>
<feature type="sequence conflict" description="In Ref. 3; AAK93517." evidence="11" ref="3">
    <original>Q</original>
    <variation>H</variation>
    <location>
        <position position="279"/>
    </location>
</feature>
<feature type="sequence conflict" description="In Ref. 3; AAK93517." evidence="11" ref="3">
    <original>S</original>
    <variation>L</variation>
    <location>
        <position position="762"/>
    </location>
</feature>
<gene>
    <name evidence="10 13" type="primary">IntS6</name>
    <name evidence="13" type="synonym">l(1)G0060</name>
    <name evidence="13" type="ORF">CG3125</name>
</gene>
<comment type="function">
    <text evidence="3 4 6 7">Component of the integrator complex, a multiprotein complex that terminates RNA polymerase II (Pol II) transcription in the promoter-proximal region of genes (PubMed:21078872, PubMed:23097424, PubMed:32966759, PubMed:37995689). The integrator complex provides a quality checkpoint during transcription elongation by driving premature transcription termination of transcripts that are unfavorably configured for transcriptional elongation: the complex terminates transcription by (1) catalyzing dephosphorylation of the C-terminal domain (CTD) of Pol II subunit Polr2A/Rbp1 and Spt5, and (2) degrading the exiting nascent RNA transcript via endonuclease activity (PubMed:32966759, PubMed:37995689). The integrator complex is also involved in the 3'-end processing of the U7 snRNA, and also the spliceosomal snRNAs U1, U2, U4 and U5 (PubMed:21078872, PubMed:23097424). Within the integrator complex, IntS6 acts as a substrate adapter for protein phosphatase 2A (PP2A) (PubMed:37995689).</text>
</comment>
<comment type="subunit">
    <text evidence="4 5 6 7 8">Belongs to the multiprotein complex Integrator, at least composed of IntS1, IntS2, IntS3, IntS4, omd/IntS5, IntS6, defl/IntS7, IntS8, IntS9, IntS10, IntS11, IntS12, asun/IntS13, IntS14 and IntS15 (PubMed:23097424, PubMed:31530651, PubMed:32966759, PubMed:37995689, PubMed:39032490). The core complex associates with protein phosphatase 2A subunits mts/PP2A and Pp2A-29B, to form the Integrator-PP2A (INTAC) complex (PubMed:32966759, PubMed:37995689).</text>
</comment>
<comment type="subcellular location">
    <subcellularLocation>
        <location evidence="8">Nucleus</location>
    </subcellularLocation>
</comment>
<comment type="similarity">
    <text evidence="11">Belongs to the Integrator subunit 6 family.</text>
</comment>
<sequence length="1284" mass="137108">MTIILFLVDTSSSMCQKAYVNGVQKTYLDIAKGAVETFLKYRQRTQDCLGDRYMLLTFEEPPANVKAGWKENHATFMNELKNLQSHGLTSMGESLRNAFDLLNLNRMQSGIDTYGQGRCPFYLEPSVIIVITDGGRYSYRNGVHQEIILPLSNQIPGTKFTKEPFRWDQRLFSLVLRMPGNKIDERVDGKVPHDDSPIERMCEVTGGRSYRVRSHYVLNQCIESLVQKVQPGVVLQFEPMLPKEATSATAGEAAGASTISGMGISSTSGAGPAPDIVFQPVKKMIYVQKHITQKTFPIGYWPLPEPYWPDSKAITLPPRDAHPKLKVLTPAVDEPQLVRSFPVDKYEIEGCPLTLQILNKREMNKCWQVIVTNGMHGFELPFGYLKAAPNFSQVHLYVLAYNYPALLPILHDLIHKYNMSPPSDLMYKFNAYVRSIPPYYCPFLRKALVNINVPYQLLQFLLPENVDNYLSPTIANQLKHIKNTAKQDQENLCMKVYKQLKQPKPPYRQVETGKLFTGAPLRRDLVRHPLLRDIFSKLHGEIDPVENYTIVVPQPTHQSSAKSHRNPFDIPRRDLVEEIAKMRETLLRPVSLVAKDSGHCLPIAEMGNYQEYLKNKDNPLREIEPTNVRQHMFGNPYKKDKHMVMVDEADLSDVAPMKSPNGNGPGGAPPGSPSGSGSPTGPGPSSPGSSPGGGSGPGMPGMPGMGGGMSGLMLGAGGSGGSSKKLDGTSRGRKRKAGPLPRSFEFRRSSTDSRSSSSGSESSTTGSAPGSPIPGATSSISGCDSAMGADGGPSSSCFDEDSNSNSSFVSSTSEASASDSGMSNSHLDPLRISFVFIEEETSDQDTPLNGYVHNFINGISDDAETGETEAVPGGASLPGASSANEPSSIGASPAVSATPATSVIPASNGSEVCSAVAAGSSSSISSSASSPGVLYVPLNGLTTHAAYSSNLGGPSSPLDNLSSLGGAAGGGGSGLLGVSKPGSLPLANGYGHGHSSAISPPSPLSLVPLSPLGTSTPAASSSGLSSSSAYFSHNDINDASEISRILQTCHNGTSSGSSVGAGASNSNLNGNGSTESGGGVSSDDHASLGGNSFDALKRTAGTAGSTAAGNPHYYWASGLNHHNNNNSSAAGAASGSTLSNNHNHRGHNNSSPNKLEVKINSSCGSSPTHNNGGMGSPGQSLPLIFTEEQREAARLHNVELRLQIFRDIRRPGRDYSQLLEHLNLVKGDQDMQSDFVDMCIVESLRFRRHRMASSIQEWWDRKQQLTAVGTNEATPSAEQAVAKS</sequence>
<dbReference type="EMBL" id="AE014298">
    <property type="protein sequence ID" value="AAF46073.2"/>
    <property type="molecule type" value="Genomic_DNA"/>
</dbReference>
<dbReference type="EMBL" id="AE014298">
    <property type="protein sequence ID" value="AAN09149.1"/>
    <property type="molecule type" value="Genomic_DNA"/>
</dbReference>
<dbReference type="EMBL" id="AE014298">
    <property type="protein sequence ID" value="AGB95105.1"/>
    <property type="molecule type" value="Genomic_DNA"/>
</dbReference>
<dbReference type="EMBL" id="AE014298">
    <property type="protein sequence ID" value="AGB95106.1"/>
    <property type="molecule type" value="Genomic_DNA"/>
</dbReference>
<dbReference type="EMBL" id="AE014298">
    <property type="protein sequence ID" value="AGB95107.1"/>
    <property type="molecule type" value="Genomic_DNA"/>
</dbReference>
<dbReference type="EMBL" id="AY052093">
    <property type="protein sequence ID" value="AAK93517.1"/>
    <property type="molecule type" value="mRNA"/>
</dbReference>
<dbReference type="RefSeq" id="NP_001259259.1">
    <property type="nucleotide sequence ID" value="NM_001272330.1"/>
</dbReference>
<dbReference type="RefSeq" id="NP_001259260.1">
    <property type="nucleotide sequence ID" value="NM_001272331.1"/>
</dbReference>
<dbReference type="RefSeq" id="NP_001259261.1">
    <property type="nucleotide sequence ID" value="NM_001272332.1"/>
</dbReference>
<dbReference type="RefSeq" id="NP_572253.2">
    <property type="nucleotide sequence ID" value="NM_132025.3"/>
</dbReference>
<dbReference type="RefSeq" id="NP_727026.1">
    <property type="nucleotide sequence ID" value="NM_167047.2"/>
</dbReference>
<dbReference type="SMR" id="Q9W485"/>
<dbReference type="FunCoup" id="Q9W485">
    <property type="interactions" value="1988"/>
</dbReference>
<dbReference type="IntAct" id="Q9W485">
    <property type="interactions" value="2"/>
</dbReference>
<dbReference type="STRING" id="7227.FBpp0304673"/>
<dbReference type="GlyGen" id="Q9W485">
    <property type="glycosylation" value="2 sites"/>
</dbReference>
<dbReference type="PaxDb" id="7227-FBpp0070806"/>
<dbReference type="EnsemblMetazoa" id="FBtr0070841">
    <property type="protein sequence ID" value="FBpp0070806"/>
    <property type="gene ID" value="FBgn0261383"/>
</dbReference>
<dbReference type="EnsemblMetazoa" id="FBtr0070842">
    <property type="protein sequence ID" value="FBpp0070807"/>
    <property type="gene ID" value="FBgn0261383"/>
</dbReference>
<dbReference type="EnsemblMetazoa" id="FBtr0332399">
    <property type="protein sequence ID" value="FBpp0304673"/>
    <property type="gene ID" value="FBgn0261383"/>
</dbReference>
<dbReference type="EnsemblMetazoa" id="FBtr0332400">
    <property type="protein sequence ID" value="FBpp0304674"/>
    <property type="gene ID" value="FBgn0261383"/>
</dbReference>
<dbReference type="EnsemblMetazoa" id="FBtr0332401">
    <property type="protein sequence ID" value="FBpp0304675"/>
    <property type="gene ID" value="FBgn0261383"/>
</dbReference>
<dbReference type="GeneID" id="31496"/>
<dbReference type="KEGG" id="dme:Dmel_CG3125"/>
<dbReference type="UCSC" id="CG3125-RA">
    <property type="organism name" value="d. melanogaster"/>
</dbReference>
<dbReference type="AGR" id="FB:FBgn0261383"/>
<dbReference type="CTD" id="26512"/>
<dbReference type="FlyBase" id="FBgn0261383">
    <property type="gene designation" value="IntS6"/>
</dbReference>
<dbReference type="VEuPathDB" id="VectorBase:FBgn0261383"/>
<dbReference type="eggNOG" id="KOG3768">
    <property type="taxonomic scope" value="Eukaryota"/>
</dbReference>
<dbReference type="GeneTree" id="ENSGT00390000016655"/>
<dbReference type="HOGENOM" id="CLU_006789_0_0_1"/>
<dbReference type="InParanoid" id="Q9W485"/>
<dbReference type="OMA" id="FEFRRMS"/>
<dbReference type="OrthoDB" id="9449012at2759"/>
<dbReference type="PhylomeDB" id="Q9W485"/>
<dbReference type="Reactome" id="R-DME-6807505">
    <property type="pathway name" value="RNA polymerase II transcribes snRNA genes"/>
</dbReference>
<dbReference type="SignaLink" id="Q9W485"/>
<dbReference type="BioGRID-ORCS" id="31496">
    <property type="hits" value="1 hit in 3 CRISPR screens"/>
</dbReference>
<dbReference type="ChiTaRS" id="IntS6">
    <property type="organism name" value="fly"/>
</dbReference>
<dbReference type="GenomeRNAi" id="31496"/>
<dbReference type="PRO" id="PR:Q9W485"/>
<dbReference type="Proteomes" id="UP000000803">
    <property type="component" value="Chromosome X"/>
</dbReference>
<dbReference type="Bgee" id="FBgn0261383">
    <property type="expression patterns" value="Expressed in adult tracheocyte (Drosophila) in insect leg and 229 other cell types or tissues"/>
</dbReference>
<dbReference type="ExpressionAtlas" id="Q9W485">
    <property type="expression patterns" value="baseline and differential"/>
</dbReference>
<dbReference type="GO" id="GO:0160232">
    <property type="term" value="C:INTAC complex"/>
    <property type="evidence" value="ECO:0000314"/>
    <property type="project" value="UniProtKB"/>
</dbReference>
<dbReference type="GO" id="GO:0032039">
    <property type="term" value="C:integrator complex"/>
    <property type="evidence" value="ECO:0000314"/>
    <property type="project" value="UniProtKB"/>
</dbReference>
<dbReference type="GO" id="GO:0005634">
    <property type="term" value="C:nucleus"/>
    <property type="evidence" value="ECO:0000314"/>
    <property type="project" value="FlyBase"/>
</dbReference>
<dbReference type="GO" id="GO:0140767">
    <property type="term" value="F:enzyme-substrate adaptor activity"/>
    <property type="evidence" value="ECO:0000314"/>
    <property type="project" value="UniProtKB"/>
</dbReference>
<dbReference type="GO" id="GO:0019888">
    <property type="term" value="F:protein phosphatase regulator activity"/>
    <property type="evidence" value="ECO:0000314"/>
    <property type="project" value="UniProtKB"/>
</dbReference>
<dbReference type="GO" id="GO:0160240">
    <property type="term" value="P:RNA polymerase II transcription initiation surveillance"/>
    <property type="evidence" value="ECO:0000314"/>
    <property type="project" value="UniProtKB"/>
</dbReference>
<dbReference type="GO" id="GO:0034472">
    <property type="term" value="P:snRNA 3'-end processing"/>
    <property type="evidence" value="ECO:0000314"/>
    <property type="project" value="FlyBase"/>
</dbReference>
<dbReference type="GO" id="GO:0016180">
    <property type="term" value="P:snRNA processing"/>
    <property type="evidence" value="ECO:0000250"/>
    <property type="project" value="FlyBase"/>
</dbReference>
<dbReference type="CDD" id="cd00198">
    <property type="entry name" value="vWFA"/>
    <property type="match status" value="1"/>
</dbReference>
<dbReference type="FunFam" id="3.40.50.410:FF:000010">
    <property type="entry name" value="Integrator complex subunit 6 like"/>
    <property type="match status" value="1"/>
</dbReference>
<dbReference type="Gene3D" id="3.40.50.410">
    <property type="entry name" value="von Willebrand factor, type A domain"/>
    <property type="match status" value="1"/>
</dbReference>
<dbReference type="InterPro" id="IPR029307">
    <property type="entry name" value="INT_SG_DDX_CT_C"/>
</dbReference>
<dbReference type="InterPro" id="IPR051113">
    <property type="entry name" value="Integrator_subunit6"/>
</dbReference>
<dbReference type="InterPro" id="IPR002035">
    <property type="entry name" value="VWF_A"/>
</dbReference>
<dbReference type="InterPro" id="IPR036465">
    <property type="entry name" value="vWFA_dom_sf"/>
</dbReference>
<dbReference type="PANTHER" id="PTHR12957">
    <property type="entry name" value="DEAD/H BOX POLYPEPTIDE 26/DICE1-RELATED"/>
    <property type="match status" value="1"/>
</dbReference>
<dbReference type="PANTHER" id="PTHR12957:SF2">
    <property type="entry name" value="INTEGRATOR COMPLEX SUBUNIT 6"/>
    <property type="match status" value="1"/>
</dbReference>
<dbReference type="Pfam" id="PF25462">
    <property type="entry name" value="Beta-barrel_INTS6"/>
    <property type="match status" value="1"/>
</dbReference>
<dbReference type="Pfam" id="PF15300">
    <property type="entry name" value="INT_SG_DDX_CT_C"/>
    <property type="match status" value="1"/>
</dbReference>
<dbReference type="Pfam" id="PF13519">
    <property type="entry name" value="VWA_2"/>
    <property type="match status" value="1"/>
</dbReference>
<dbReference type="SUPFAM" id="SSF53300">
    <property type="entry name" value="vWA-like"/>
    <property type="match status" value="1"/>
</dbReference>
<dbReference type="PROSITE" id="PS50234">
    <property type="entry name" value="VWFA"/>
    <property type="match status" value="1"/>
</dbReference>
<reference evidence="14" key="1">
    <citation type="journal article" date="2000" name="Science">
        <title>The genome sequence of Drosophila melanogaster.</title>
        <authorList>
            <person name="Adams M.D."/>
            <person name="Celniker S.E."/>
            <person name="Holt R.A."/>
            <person name="Evans C.A."/>
            <person name="Gocayne J.D."/>
            <person name="Amanatides P.G."/>
            <person name="Scherer S.E."/>
            <person name="Li P.W."/>
            <person name="Hoskins R.A."/>
            <person name="Galle R.F."/>
            <person name="George R.A."/>
            <person name="Lewis S.E."/>
            <person name="Richards S."/>
            <person name="Ashburner M."/>
            <person name="Henderson S.N."/>
            <person name="Sutton G.G."/>
            <person name="Wortman J.R."/>
            <person name="Yandell M.D."/>
            <person name="Zhang Q."/>
            <person name="Chen L.X."/>
            <person name="Brandon R.C."/>
            <person name="Rogers Y.-H.C."/>
            <person name="Blazej R.G."/>
            <person name="Champe M."/>
            <person name="Pfeiffer B.D."/>
            <person name="Wan K.H."/>
            <person name="Doyle C."/>
            <person name="Baxter E.G."/>
            <person name="Helt G."/>
            <person name="Nelson C.R."/>
            <person name="Miklos G.L.G."/>
            <person name="Abril J.F."/>
            <person name="Agbayani A."/>
            <person name="An H.-J."/>
            <person name="Andrews-Pfannkoch C."/>
            <person name="Baldwin D."/>
            <person name="Ballew R.M."/>
            <person name="Basu A."/>
            <person name="Baxendale J."/>
            <person name="Bayraktaroglu L."/>
            <person name="Beasley E.M."/>
            <person name="Beeson K.Y."/>
            <person name="Benos P.V."/>
            <person name="Berman B.P."/>
            <person name="Bhandari D."/>
            <person name="Bolshakov S."/>
            <person name="Borkova D."/>
            <person name="Botchan M.R."/>
            <person name="Bouck J."/>
            <person name="Brokstein P."/>
            <person name="Brottier P."/>
            <person name="Burtis K.C."/>
            <person name="Busam D.A."/>
            <person name="Butler H."/>
            <person name="Cadieu E."/>
            <person name="Center A."/>
            <person name="Chandra I."/>
            <person name="Cherry J.M."/>
            <person name="Cawley S."/>
            <person name="Dahlke C."/>
            <person name="Davenport L.B."/>
            <person name="Davies P."/>
            <person name="de Pablos B."/>
            <person name="Delcher A."/>
            <person name="Deng Z."/>
            <person name="Mays A.D."/>
            <person name="Dew I."/>
            <person name="Dietz S.M."/>
            <person name="Dodson K."/>
            <person name="Doup L.E."/>
            <person name="Downes M."/>
            <person name="Dugan-Rocha S."/>
            <person name="Dunkov B.C."/>
            <person name="Dunn P."/>
            <person name="Durbin K.J."/>
            <person name="Evangelista C.C."/>
            <person name="Ferraz C."/>
            <person name="Ferriera S."/>
            <person name="Fleischmann W."/>
            <person name="Fosler C."/>
            <person name="Gabrielian A.E."/>
            <person name="Garg N.S."/>
            <person name="Gelbart W.M."/>
            <person name="Glasser K."/>
            <person name="Glodek A."/>
            <person name="Gong F."/>
            <person name="Gorrell J.H."/>
            <person name="Gu Z."/>
            <person name="Guan P."/>
            <person name="Harris M."/>
            <person name="Harris N.L."/>
            <person name="Harvey D.A."/>
            <person name="Heiman T.J."/>
            <person name="Hernandez J.R."/>
            <person name="Houck J."/>
            <person name="Hostin D."/>
            <person name="Houston K.A."/>
            <person name="Howland T.J."/>
            <person name="Wei M.-H."/>
            <person name="Ibegwam C."/>
            <person name="Jalali M."/>
            <person name="Kalush F."/>
            <person name="Karpen G.H."/>
            <person name="Ke Z."/>
            <person name="Kennison J.A."/>
            <person name="Ketchum K.A."/>
            <person name="Kimmel B.E."/>
            <person name="Kodira C.D."/>
            <person name="Kraft C.L."/>
            <person name="Kravitz S."/>
            <person name="Kulp D."/>
            <person name="Lai Z."/>
            <person name="Lasko P."/>
            <person name="Lei Y."/>
            <person name="Levitsky A.A."/>
            <person name="Li J.H."/>
            <person name="Li Z."/>
            <person name="Liang Y."/>
            <person name="Lin X."/>
            <person name="Liu X."/>
            <person name="Mattei B."/>
            <person name="McIntosh T.C."/>
            <person name="McLeod M.P."/>
            <person name="McPherson D."/>
            <person name="Merkulov G."/>
            <person name="Milshina N.V."/>
            <person name="Mobarry C."/>
            <person name="Morris J."/>
            <person name="Moshrefi A."/>
            <person name="Mount S.M."/>
            <person name="Moy M."/>
            <person name="Murphy B."/>
            <person name="Murphy L."/>
            <person name="Muzny D.M."/>
            <person name="Nelson D.L."/>
            <person name="Nelson D.R."/>
            <person name="Nelson K.A."/>
            <person name="Nixon K."/>
            <person name="Nusskern D.R."/>
            <person name="Pacleb J.M."/>
            <person name="Palazzolo M."/>
            <person name="Pittman G.S."/>
            <person name="Pan S."/>
            <person name="Pollard J."/>
            <person name="Puri V."/>
            <person name="Reese M.G."/>
            <person name="Reinert K."/>
            <person name="Remington K."/>
            <person name="Saunders R.D.C."/>
            <person name="Scheeler F."/>
            <person name="Shen H."/>
            <person name="Shue B.C."/>
            <person name="Siden-Kiamos I."/>
            <person name="Simpson M."/>
            <person name="Skupski M.P."/>
            <person name="Smith T.J."/>
            <person name="Spier E."/>
            <person name="Spradling A.C."/>
            <person name="Stapleton M."/>
            <person name="Strong R."/>
            <person name="Sun E."/>
            <person name="Svirskas R."/>
            <person name="Tector C."/>
            <person name="Turner R."/>
            <person name="Venter E."/>
            <person name="Wang A.H."/>
            <person name="Wang X."/>
            <person name="Wang Z.-Y."/>
            <person name="Wassarman D.A."/>
            <person name="Weinstock G.M."/>
            <person name="Weissenbach J."/>
            <person name="Williams S.M."/>
            <person name="Woodage T."/>
            <person name="Worley K.C."/>
            <person name="Wu D."/>
            <person name="Yang S."/>
            <person name="Yao Q.A."/>
            <person name="Ye J."/>
            <person name="Yeh R.-F."/>
            <person name="Zaveri J.S."/>
            <person name="Zhan M."/>
            <person name="Zhang G."/>
            <person name="Zhao Q."/>
            <person name="Zheng L."/>
            <person name="Zheng X.H."/>
            <person name="Zhong F.N."/>
            <person name="Zhong W."/>
            <person name="Zhou X."/>
            <person name="Zhu S.C."/>
            <person name="Zhu X."/>
            <person name="Smith H.O."/>
            <person name="Gibbs R.A."/>
            <person name="Myers E.W."/>
            <person name="Rubin G.M."/>
            <person name="Venter J.C."/>
        </authorList>
    </citation>
    <scope>NUCLEOTIDE SEQUENCE [LARGE SCALE GENOMIC DNA]</scope>
    <source>
        <strain evidence="14">Berkeley</strain>
    </source>
</reference>
<reference evidence="14" key="2">
    <citation type="journal article" date="2002" name="Genome Biol.">
        <title>Annotation of the Drosophila melanogaster euchromatic genome: a systematic review.</title>
        <authorList>
            <person name="Misra S."/>
            <person name="Crosby M.A."/>
            <person name="Mungall C.J."/>
            <person name="Matthews B.B."/>
            <person name="Campbell K.S."/>
            <person name="Hradecky P."/>
            <person name="Huang Y."/>
            <person name="Kaminker J.S."/>
            <person name="Millburn G.H."/>
            <person name="Prochnik S.E."/>
            <person name="Smith C.D."/>
            <person name="Tupy J.L."/>
            <person name="Whitfield E.J."/>
            <person name="Bayraktaroglu L."/>
            <person name="Berman B.P."/>
            <person name="Bettencourt B.R."/>
            <person name="Celniker S.E."/>
            <person name="de Grey A.D.N.J."/>
            <person name="Drysdale R.A."/>
            <person name="Harris N.L."/>
            <person name="Richter J."/>
            <person name="Russo S."/>
            <person name="Schroeder A.J."/>
            <person name="Shu S.Q."/>
            <person name="Stapleton M."/>
            <person name="Yamada C."/>
            <person name="Ashburner M."/>
            <person name="Gelbart W.M."/>
            <person name="Rubin G.M."/>
            <person name="Lewis S.E."/>
        </authorList>
    </citation>
    <scope>GENOME REANNOTATION</scope>
    <source>
        <strain evidence="14">Berkeley</strain>
    </source>
</reference>
<reference evidence="12" key="3">
    <citation type="submission" date="2001-08" db="EMBL/GenBank/DDBJ databases">
        <authorList>
            <person name="Stapleton M."/>
            <person name="Brokstein P."/>
            <person name="Hong L."/>
            <person name="Agbayani A."/>
            <person name="Carlson J."/>
            <person name="Champe M."/>
            <person name="Chavez C."/>
            <person name="Dorsett V."/>
            <person name="Farfan D."/>
            <person name="Frise E."/>
            <person name="George R."/>
            <person name="Gonzalez M."/>
            <person name="Guarin H."/>
            <person name="Li P."/>
            <person name="Liao G."/>
            <person name="Miranda A."/>
            <person name="Mungall C.J."/>
            <person name="Nunoo J."/>
            <person name="Pacleb J."/>
            <person name="Paragas V."/>
            <person name="Park S."/>
            <person name="Phouanenavong S."/>
            <person name="Wan K."/>
            <person name="Yu C."/>
            <person name="Lewis S.E."/>
            <person name="Rubin G.M."/>
            <person name="Celniker S."/>
        </authorList>
    </citation>
    <scope>NUCLEOTIDE SEQUENCE [LARGE SCALE MRNA]</scope>
    <source>
        <strain evidence="12">Berkeley</strain>
        <tissue evidence="12">Embryo</tissue>
    </source>
</reference>
<reference evidence="11" key="4">
    <citation type="journal article" date="2011" name="Mol. Cell. Biol.">
        <title>A subset of Drosophila integrator proteins is essential for efficient U7 snRNA and spliceosomal snRNA 3'-end formation.</title>
        <authorList>
            <person name="Ezzeddine N."/>
            <person name="Chen J."/>
            <person name="Waltenspiel B."/>
            <person name="Burch B."/>
            <person name="Albrecht T."/>
            <person name="Zhuo M."/>
            <person name="Warren W.D."/>
            <person name="Marzluff W.F."/>
            <person name="Wagner E.J."/>
        </authorList>
    </citation>
    <scope>FUNCTION</scope>
</reference>
<reference evidence="11" key="5">
    <citation type="journal article" date="2012" name="RNA">
        <title>An RNAi screen identifies additional members of the Drosophila Integrator complex and a requirement for cyclin C/Cdk8 in snRNA 3'-end formation.</title>
        <authorList>
            <person name="Chen J."/>
            <person name="Ezzeddine N."/>
            <person name="Waltenspiel B."/>
            <person name="Albrecht T.R."/>
            <person name="Warren W.D."/>
            <person name="Marzluff W.F."/>
            <person name="Wagner E.J."/>
        </authorList>
    </citation>
    <scope>FUNCTION</scope>
    <scope>SUBUNIT</scope>
</reference>
<reference key="6">
    <citation type="journal article" date="2019" name="Genes Dev.">
        <title>The Integrator complex cleaves nascent mRNAs to attenuate transcription.</title>
        <authorList>
            <person name="Tatomer D.C."/>
            <person name="Elrod N.D."/>
            <person name="Liang D."/>
            <person name="Xiao M.S."/>
            <person name="Jiang J.Z."/>
            <person name="Jonathan M."/>
            <person name="Huang K.L."/>
            <person name="Wagner E.J."/>
            <person name="Cherry S."/>
            <person name="Wilusz J.E."/>
        </authorList>
    </citation>
    <scope>IDENTIFICATION IN THE INTEGRATOR COMPLEX</scope>
</reference>
<reference key="7">
    <citation type="journal article" date="2020" name="Mol. Cell">
        <title>Integrator recruits protein phosphatase 2A to prevent pause release and facilitate transcription termination.</title>
        <authorList>
            <person name="Huang K.L."/>
            <person name="Jee D."/>
            <person name="Stein C.B."/>
            <person name="Elrod N.D."/>
            <person name="Henriques T."/>
            <person name="Mascibroda L.G."/>
            <person name="Baillat D."/>
            <person name="Russell W.K."/>
            <person name="Adelman K."/>
            <person name="Wagner E.J."/>
        </authorList>
    </citation>
    <scope>FUNCTION</scope>
    <scope>IDENTIFICATION IN THE INTAC COMPLEX</scope>
</reference>
<reference key="8">
    <citation type="journal article" date="2023" name="Mol. Cell">
        <title>IntS6 and the Integrator phosphatase module tune the efficiency of select premature transcription termination events.</title>
        <authorList>
            <person name="Fujiwara R."/>
            <person name="Zhai S.N."/>
            <person name="Liang D."/>
            <person name="Shah A.P."/>
            <person name="Tracey M."/>
            <person name="Ma X.K."/>
            <person name="Fields C.J."/>
            <person name="Mendoza-Figueroa M.S."/>
            <person name="Meline M.C."/>
            <person name="Tatomer D.C."/>
            <person name="Yang L."/>
            <person name="Wilusz J.E."/>
        </authorList>
    </citation>
    <scope>FUNCTION</scope>
    <scope>IDENTIFICATION IN THE INTAC COMPLEX</scope>
</reference>
<reference key="9">
    <citation type="journal article" date="2024" name="Mol. Cell">
        <title>Cytoplasmic binding partners of the Integrator endonuclease INTS11 and its paralog CPSF73 are required for their nuclear function.</title>
        <authorList>
            <person name="Lin M.H."/>
            <person name="Jensen M.K."/>
            <person name="Elrod N.D."/>
            <person name="Chu H.F."/>
            <person name="Haseley M."/>
            <person name="Beam A.C."/>
            <person name="Huang K.L."/>
            <person name="Chiang W."/>
            <person name="Russell W.K."/>
            <person name="Williams K."/>
            <person name="Proschel C."/>
            <person name="Wagner E.J."/>
            <person name="Tong L."/>
        </authorList>
    </citation>
    <scope>IDENTIFICATION IN THE INTEGRATOR COMPLEX</scope>
    <scope>SUBCELLULAR LOCATION</scope>
</reference>
<accession>Q9W485</accession>
<accession>Q960F1</accession>